<reference key="1">
    <citation type="submission" date="2008-10" db="EMBL/GenBank/DDBJ databases">
        <title>Genome sequence of Bacillus cereus AH820.</title>
        <authorList>
            <person name="Dodson R.J."/>
            <person name="Durkin A.S."/>
            <person name="Rosovitz M.J."/>
            <person name="Rasko D.A."/>
            <person name="Hoffmaster A."/>
            <person name="Ravel J."/>
            <person name="Sutton G."/>
        </authorList>
    </citation>
    <scope>NUCLEOTIDE SEQUENCE [LARGE SCALE GENOMIC DNA]</scope>
    <source>
        <strain>AH820</strain>
    </source>
</reference>
<protein>
    <recommendedName>
        <fullName evidence="1">1-pyrroline-5-carboxylate dehydrogenase</fullName>
        <shortName evidence="1">P5C dehydrogenase</shortName>
        <ecNumber evidence="1">1.2.1.88</ecNumber>
    </recommendedName>
    <alternativeName>
        <fullName evidence="1">L-glutamate gamma-semialdehyde dehydrogenase</fullName>
    </alternativeName>
</protein>
<proteinExistence type="inferred from homology"/>
<keyword id="KW-0520">NAD</keyword>
<keyword id="KW-0560">Oxidoreductase</keyword>
<gene>
    <name evidence="1" type="primary">rocA</name>
    <name type="ordered locus">BCAH820_0340</name>
</gene>
<organism>
    <name type="scientific">Bacillus cereus (strain AH820)</name>
    <dbReference type="NCBI Taxonomy" id="405535"/>
    <lineage>
        <taxon>Bacteria</taxon>
        <taxon>Bacillati</taxon>
        <taxon>Bacillota</taxon>
        <taxon>Bacilli</taxon>
        <taxon>Bacillales</taxon>
        <taxon>Bacillaceae</taxon>
        <taxon>Bacillus</taxon>
        <taxon>Bacillus cereus group</taxon>
    </lineage>
</organism>
<feature type="chain" id="PRO_1000189845" description="1-pyrroline-5-carboxylate dehydrogenase">
    <location>
        <begin position="1"/>
        <end position="515"/>
    </location>
</feature>
<feature type="active site" evidence="1">
    <location>
        <position position="286"/>
    </location>
</feature>
<feature type="active site" evidence="1">
    <location>
        <position position="320"/>
    </location>
</feature>
<evidence type="ECO:0000255" key="1">
    <source>
        <dbReference type="HAMAP-Rule" id="MF_00733"/>
    </source>
</evidence>
<name>ROCA_BACC0</name>
<comment type="catalytic activity">
    <reaction evidence="1">
        <text>L-glutamate 5-semialdehyde + NAD(+) + H2O = L-glutamate + NADH + 2 H(+)</text>
        <dbReference type="Rhea" id="RHEA:30235"/>
        <dbReference type="ChEBI" id="CHEBI:15377"/>
        <dbReference type="ChEBI" id="CHEBI:15378"/>
        <dbReference type="ChEBI" id="CHEBI:29985"/>
        <dbReference type="ChEBI" id="CHEBI:57540"/>
        <dbReference type="ChEBI" id="CHEBI:57945"/>
        <dbReference type="ChEBI" id="CHEBI:58066"/>
        <dbReference type="EC" id="1.2.1.88"/>
    </reaction>
</comment>
<comment type="pathway">
    <text evidence="1">Amino-acid degradation; L-proline degradation into L-glutamate; L-glutamate from L-proline: step 2/2.</text>
</comment>
<comment type="similarity">
    <text evidence="1">Belongs to the aldehyde dehydrogenase family. RocA subfamily.</text>
</comment>
<accession>B7JM99</accession>
<dbReference type="EC" id="1.2.1.88" evidence="1"/>
<dbReference type="EMBL" id="CP001283">
    <property type="protein sequence ID" value="ACK89500.1"/>
    <property type="molecule type" value="Genomic_DNA"/>
</dbReference>
<dbReference type="SMR" id="B7JM99"/>
<dbReference type="KEGG" id="bcu:BCAH820_0340"/>
<dbReference type="HOGENOM" id="CLU_005391_0_0_9"/>
<dbReference type="UniPathway" id="UPA00261">
    <property type="reaction ID" value="UER00374"/>
</dbReference>
<dbReference type="Proteomes" id="UP000001363">
    <property type="component" value="Chromosome"/>
</dbReference>
<dbReference type="GO" id="GO:0009898">
    <property type="term" value="C:cytoplasmic side of plasma membrane"/>
    <property type="evidence" value="ECO:0007669"/>
    <property type="project" value="TreeGrafter"/>
</dbReference>
<dbReference type="GO" id="GO:0003842">
    <property type="term" value="F:1-pyrroline-5-carboxylate dehydrogenase activity"/>
    <property type="evidence" value="ECO:0007669"/>
    <property type="project" value="UniProtKB-UniRule"/>
</dbReference>
<dbReference type="GO" id="GO:0006537">
    <property type="term" value="P:glutamate biosynthetic process"/>
    <property type="evidence" value="ECO:0007669"/>
    <property type="project" value="UniProtKB-UniRule"/>
</dbReference>
<dbReference type="GO" id="GO:0010133">
    <property type="term" value="P:proline catabolic process to glutamate"/>
    <property type="evidence" value="ECO:0007669"/>
    <property type="project" value="UniProtKB-UniPathway"/>
</dbReference>
<dbReference type="CDD" id="cd07124">
    <property type="entry name" value="ALDH_PutA-P5CDH-RocA"/>
    <property type="match status" value="1"/>
</dbReference>
<dbReference type="FunFam" id="3.40.309.10:FF:000005">
    <property type="entry name" value="1-pyrroline-5-carboxylate dehydrogenase 1"/>
    <property type="match status" value="1"/>
</dbReference>
<dbReference type="FunFam" id="3.40.605.10:FF:000045">
    <property type="entry name" value="1-pyrroline-5-carboxylate dehydrogenase 1"/>
    <property type="match status" value="1"/>
</dbReference>
<dbReference type="Gene3D" id="3.40.605.10">
    <property type="entry name" value="Aldehyde Dehydrogenase, Chain A, domain 1"/>
    <property type="match status" value="1"/>
</dbReference>
<dbReference type="Gene3D" id="3.40.309.10">
    <property type="entry name" value="Aldehyde Dehydrogenase, Chain A, domain 2"/>
    <property type="match status" value="1"/>
</dbReference>
<dbReference type="HAMAP" id="MF_00733">
    <property type="entry name" value="RocA"/>
    <property type="match status" value="1"/>
</dbReference>
<dbReference type="InterPro" id="IPR016161">
    <property type="entry name" value="Ald_DH/histidinol_DH"/>
</dbReference>
<dbReference type="InterPro" id="IPR016163">
    <property type="entry name" value="Ald_DH_C"/>
</dbReference>
<dbReference type="InterPro" id="IPR016160">
    <property type="entry name" value="Ald_DH_CS_CYS"/>
</dbReference>
<dbReference type="InterPro" id="IPR029510">
    <property type="entry name" value="Ald_DH_CS_GLU"/>
</dbReference>
<dbReference type="InterPro" id="IPR016162">
    <property type="entry name" value="Ald_DH_N"/>
</dbReference>
<dbReference type="InterPro" id="IPR015590">
    <property type="entry name" value="Aldehyde_DH_dom"/>
</dbReference>
<dbReference type="InterPro" id="IPR050485">
    <property type="entry name" value="Proline_metab_enzyme"/>
</dbReference>
<dbReference type="InterPro" id="IPR005932">
    <property type="entry name" value="RocA"/>
</dbReference>
<dbReference type="InterPro" id="IPR047597">
    <property type="entry name" value="RocA_bacillales"/>
</dbReference>
<dbReference type="NCBIfam" id="TIGR01237">
    <property type="entry name" value="D1pyr5carbox2"/>
    <property type="match status" value="1"/>
</dbReference>
<dbReference type="NCBIfam" id="NF002852">
    <property type="entry name" value="PRK03137.1"/>
    <property type="match status" value="1"/>
</dbReference>
<dbReference type="PANTHER" id="PTHR42862">
    <property type="entry name" value="DELTA-1-PYRROLINE-5-CARBOXYLATE DEHYDROGENASE 1, ISOFORM A-RELATED"/>
    <property type="match status" value="1"/>
</dbReference>
<dbReference type="PANTHER" id="PTHR42862:SF1">
    <property type="entry name" value="DELTA-1-PYRROLINE-5-CARBOXYLATE DEHYDROGENASE 2, ISOFORM A-RELATED"/>
    <property type="match status" value="1"/>
</dbReference>
<dbReference type="Pfam" id="PF00171">
    <property type="entry name" value="Aldedh"/>
    <property type="match status" value="1"/>
</dbReference>
<dbReference type="SUPFAM" id="SSF53720">
    <property type="entry name" value="ALDH-like"/>
    <property type="match status" value="1"/>
</dbReference>
<dbReference type="PROSITE" id="PS00070">
    <property type="entry name" value="ALDEHYDE_DEHYDR_CYS"/>
    <property type="match status" value="1"/>
</dbReference>
<dbReference type="PROSITE" id="PS00687">
    <property type="entry name" value="ALDEHYDE_DEHYDR_GLU"/>
    <property type="match status" value="1"/>
</dbReference>
<sequence length="515" mass="56225">MVVAYKHEPFTDFSVEANKLAFEEGLKKVESYLGQDYPLIIGGEKITTEDKIVSVNPANKEELVGRVSKASRELAEKAMQVADETFQTWRKSKPEMRADILFRAAAIVRRRKHEFSAILVKEAGKPWNEADADTAEAIDFMEYYGRQMLKLKDGIPVESRPIEYNRFSYIPLGVGVIISPWNFPFAIMAGMTTAALVSGNTVLLKPASTTPVVAAKFMEVLEEAGLPAGVVNFVPGNGSEVGDYLVDHPRTRFISFTGSRDVGIRIYERAAKVNPGQIWLKRVIAEMGGKDTIVVDKEADLELAAKSIVASAFGFSGQKCSACSRAVIHEDVYDHVLNRAVELTKELTVANPAVLGTNMGPVNDQAAFDKVMSYVAIGKEEGRILAGGEGDDSKGWFIQPTIVADVAEDARLMKEEIFGPVVAFCKAKDFDHALAIANNTEYGLTGAVISNNRDHIEKAREDFHVGNLYFNRGCTGAIVGYQPFGGFNMSGTDSKAGGPDYLALHMQAKTTSETL</sequence>